<organism>
    <name type="scientific">Manihot esculenta</name>
    <name type="common">Cassava</name>
    <name type="synonym">Jatropha manihot</name>
    <dbReference type="NCBI Taxonomy" id="3983"/>
    <lineage>
        <taxon>Eukaryota</taxon>
        <taxon>Viridiplantae</taxon>
        <taxon>Streptophyta</taxon>
        <taxon>Embryophyta</taxon>
        <taxon>Tracheophyta</taxon>
        <taxon>Spermatophyta</taxon>
        <taxon>Magnoliopsida</taxon>
        <taxon>eudicotyledons</taxon>
        <taxon>Gunneridae</taxon>
        <taxon>Pentapetalae</taxon>
        <taxon>rosids</taxon>
        <taxon>fabids</taxon>
        <taxon>Malpighiales</taxon>
        <taxon>Euphorbiaceae</taxon>
        <taxon>Crotonoideae</taxon>
        <taxon>Manihoteae</taxon>
        <taxon>Manihot</taxon>
    </lineage>
</organism>
<sequence>MVTAHFVLIHTICHGAWIWHKLKPALERAGHKVTALDMAASGIDPRQIEQINSFDEYSEPLLTFLEKLPQGEKVIIVGESCAGLNIAIAADRYVDKIAAGVFHNSLLPDTVHSPSYTVEKLLESFPDWRDTEYFTFTNITGETITTMKLGFVLLRENLFTKCTDGEYELAKMVMRKGSLFQNVLAQRPKFTEKGYGSIKKVYIWTDQDKIFLPDFQRWQIANYKPDKVYQVQGGDHKLQLTKTEEVAHILQEVADAYA</sequence>
<protein>
    <recommendedName>
        <fullName evidence="14">(S)-hydroxynitrile lyase</fullName>
        <shortName evidence="9 10 13 14">MeHNL</shortName>
        <ecNumber evidence="8">4.1.2.47</ecNumber>
    </recommendedName>
    <alternativeName>
        <fullName evidence="10">2-hydroxy-2-methylpropanenitrile lyase</fullName>
    </alternativeName>
    <alternativeName>
        <fullName evidence="10 12">Acetone cyanohydrin lyase</fullName>
    </alternativeName>
    <alternativeName>
        <fullName evidence="12">Alpha-hydroxynitrile lyase</fullName>
    </alternativeName>
    <alternativeName>
        <fullName evidence="9 10 11 13">Hydroxynitrile lyase</fullName>
    </alternativeName>
</protein>
<reference key="1">
    <citation type="journal article" date="1994" name="Arch. Biochem. Biophys.">
        <title>Purification, characterization, and cloning of alpha-hydroxynitrile lyase from cassava (Manihot esculenta Crantz).</title>
        <authorList>
            <person name="Hughes J."/>
            <person name="Carvalho F.J.P.D.C."/>
            <person name="Hughes M.A."/>
        </authorList>
    </citation>
    <scope>NUCLEOTIDE SEQUENCE [MRNA]</scope>
    <scope>PROTEIN SEQUENCE OF 2-37 AND 169-192</scope>
    <scope>FUNCTION</scope>
    <scope>CATALYTIC ACTIVITY</scope>
    <scope>BIOPHYSICOCHEMICAL PROPERTIES</scope>
    <source>
        <tissue>Cotyledon</tissue>
    </source>
</reference>
<reference key="2">
    <citation type="journal article" date="1996" name="Angew. Chem. Int. Ed. Engl.">
        <title>The first recombinant hydroxynitrile lyase and its application in the synthesis of (S)-cyanohydrins.</title>
        <authorList>
            <person name="Foerster S."/>
            <person name="Roos J."/>
            <person name="Effenberger F."/>
            <person name="Wajant H."/>
            <person name="Sprauer A."/>
        </authorList>
    </citation>
    <scope>FUNCTION</scope>
    <scope>CATALYTIC ACTIVITY</scope>
    <scope>BIOTECHNOLOGY</scope>
</reference>
<reference key="3">
    <citation type="journal article" date="1996" name="J. Biol. Chem.">
        <title>Identification of potential active-site residues in the hydroxynitrile lyase from Manihot esculenta by site-directed mutagenesis.</title>
        <authorList>
            <person name="Wajant H."/>
            <person name="Pfizenmaier K."/>
        </authorList>
    </citation>
    <scope>FUNCTION</scope>
    <scope>CATALYTIC ACTIVITY</scope>
    <scope>BIOPHYSICOCHEMICAL PROPERTIES</scope>
    <scope>SUBUNIT</scope>
    <scope>MUTAGENESIS OF SER-80; ASP-208 AND HIS-236</scope>
</reference>
<reference evidence="21 22 23" key="4">
    <citation type="journal article" date="2001" name="Acta Crystallogr. D">
        <title>Structure of hydroxynitrile lyase from Manihot esculenta in complex with substrates acetone and chloroacetone: implications for the mechanism of cyanogenesis.</title>
        <authorList>
            <person name="Lauble H."/>
            <person name="Forster S."/>
            <person name="Miehlich B."/>
            <person name="Wajant H."/>
            <person name="Effenberger F."/>
        </authorList>
    </citation>
    <scope>X-RAY CRYSTALLOGRAPHY (2.20 ANGSTROMS) IN SUBSTRATE-FREE FORM AND IN COMPLEXES WITH ACETONE AND CHLOROACETONE</scope>
    <scope>REACTION MECHANISM</scope>
</reference>
<reference evidence="24 25" key="5">
    <citation type="journal article" date="2001" name="Protein Sci.">
        <title>Mechanistic aspects of cyanogenesis from active-site mutant Ser80Ala of hydroxynitrile lyase from Manihot esculenta in complex with acetone cyanohydrin.</title>
        <authorList>
            <person name="Lauble H."/>
            <person name="Miehlich B."/>
            <person name="Foerster S."/>
            <person name="Wajant H."/>
            <person name="Effenberger F."/>
        </authorList>
    </citation>
    <scope>X-RAY CRYSTALLOGRAPHY (2.10 ANGSTROMS) OF INACTIVE MUTANT ALA-80 IN SUBSTRATE-FREE FORM AND IN COMPLEX WITH 2-HYDROXY-2-METHYLPROPANENITRILE</scope>
    <scope>FUNCTION</scope>
    <scope>CATALYTIC ACTIVITY</scope>
    <scope>BIOPHYSICOCHEMICAL PROPERTIES</scope>
    <scope>MUTAGENESIS OF THR-11 AND CYS-81</scope>
    <scope>REACTION MECHANISM</scope>
</reference>
<reference evidence="26 27" key="6">
    <citation type="journal article" date="2002" name="Protein Sci.">
        <title>Structure determinants of substrate specificity of hydroxynitrile lyase from Manihot esculenta.</title>
        <authorList>
            <person name="Lauble H."/>
            <person name="Miehlich B."/>
            <person name="Foerster S."/>
            <person name="Kobler C."/>
            <person name="Wajant H."/>
            <person name="Effenberger F."/>
        </authorList>
    </citation>
    <scope>X-RAY CRYSTALLOGRAPHY (2.10 ANGSTROMS) OF MUTANT ALA-128 IN SUBSTRATE-FREE FORM AND IN COMPLEX WITH 4-HYDROXYBENZALDEHYDE</scope>
    <scope>MUTAGENESIS OF TRP-128</scope>
    <scope>FUNCTION</scope>
    <scope>CATALYTIC ACTIVITY</scope>
    <scope>BIOPHYSICOCHEMICAL PROPERTIES</scope>
</reference>
<feature type="initiator methionine" description="Removed" evidence="6">
    <location>
        <position position="1"/>
    </location>
</feature>
<feature type="chain" id="PRO_0000084018" description="(S)-hydroxynitrile lyase">
    <location>
        <begin position="2"/>
        <end position="258"/>
    </location>
</feature>
<feature type="domain" description="AB hydrolase-1" evidence="2">
    <location>
        <begin position="5"/>
        <end position="242"/>
    </location>
</feature>
<feature type="active site" description="Proton donor/acceptor" evidence="16 17">
    <location>
        <position position="80"/>
    </location>
</feature>
<feature type="active site" description="Proton donor/acceptor" evidence="16 17">
    <location>
        <position position="236"/>
    </location>
</feature>
<feature type="binding site" evidence="4 25">
    <location>
        <position position="11"/>
    </location>
    <ligand>
        <name>2-hydroxy-2-methylpropanenitrile</name>
        <dbReference type="ChEBI" id="CHEBI:15348"/>
    </ligand>
</feature>
<feature type="binding site" evidence="3 21">
    <location>
        <position position="11"/>
    </location>
    <ligand>
        <name>acetone</name>
        <dbReference type="ChEBI" id="CHEBI:15347"/>
    </ligand>
</feature>
<feature type="binding site" evidence="1">
    <location>
        <position position="80"/>
    </location>
    <ligand>
        <name>2-hydroxy-2-methylpropanenitrile</name>
        <dbReference type="ChEBI" id="CHEBI:15348"/>
    </ligand>
</feature>
<feature type="binding site" evidence="3 21">
    <location>
        <position position="80"/>
    </location>
    <ligand>
        <name>acetone</name>
        <dbReference type="ChEBI" id="CHEBI:15347"/>
    </ligand>
</feature>
<feature type="binding site" evidence="3 21">
    <location>
        <position position="81"/>
    </location>
    <ligand>
        <name>acetone</name>
        <dbReference type="ChEBI" id="CHEBI:15347"/>
    </ligand>
</feature>
<feature type="site" description="Increases basicity of active site His" evidence="17">
    <location>
        <position position="208"/>
    </location>
</feature>
<feature type="mutagenesis site" description="95% decrease in catalytic activity." evidence="4">
    <original>T</original>
    <variation>A</variation>
    <location>
        <position position="11"/>
    </location>
</feature>
<feature type="mutagenesis site" description="Loss of catalytic activity." evidence="7">
    <original>S</original>
    <variation>A</variation>
    <location>
        <position position="80"/>
    </location>
</feature>
<feature type="mutagenesis site" description="No change in catalytic activity and substrate affinity." evidence="4">
    <original>C</original>
    <variation>A</variation>
    <location>
        <position position="81"/>
    </location>
</feature>
<feature type="mutagenesis site" description="Slightly reduced affinity and catalytic activity toward acetone cyanohydrin but increased efficiency on mandelonitrile. Acquired ability to use 4-hydroxymandelonitrile as substrate." evidence="5">
    <original>W</original>
    <variation>A</variation>
    <location>
        <position position="128"/>
    </location>
</feature>
<feature type="mutagenesis site" description="80% decrease in catalytic activity." evidence="7">
    <original>D</original>
    <variation>A</variation>
    <location>
        <position position="208"/>
    </location>
</feature>
<feature type="mutagenesis site" description="Loss of catalytic activity." evidence="7">
    <original>H</original>
    <variation>A</variation>
    <location>
        <position position="236"/>
    </location>
</feature>
<feature type="strand" evidence="28">
    <location>
        <begin position="5"/>
        <end position="9"/>
    </location>
</feature>
<feature type="helix" evidence="28">
    <location>
        <begin position="16"/>
        <end position="19"/>
    </location>
</feature>
<feature type="helix" evidence="28">
    <location>
        <begin position="22"/>
        <end position="28"/>
    </location>
</feature>
<feature type="strand" evidence="28">
    <location>
        <begin position="32"/>
        <end position="36"/>
    </location>
</feature>
<feature type="helix" evidence="28">
    <location>
        <begin position="48"/>
        <end position="50"/>
    </location>
</feature>
<feature type="helix" evidence="28">
    <location>
        <begin position="54"/>
        <end position="57"/>
    </location>
</feature>
<feature type="helix" evidence="28">
    <location>
        <begin position="59"/>
        <end position="67"/>
    </location>
</feature>
<feature type="strand" evidence="28">
    <location>
        <begin position="74"/>
        <end position="80"/>
    </location>
</feature>
<feature type="helix" evidence="28">
    <location>
        <begin position="83"/>
        <end position="93"/>
    </location>
</feature>
<feature type="helix" evidence="28">
    <location>
        <begin position="94"/>
        <end position="96"/>
    </location>
</feature>
<feature type="strand" evidence="28">
    <location>
        <begin position="97"/>
        <end position="105"/>
    </location>
</feature>
<feature type="strand" evidence="28">
    <location>
        <begin position="110"/>
        <end position="112"/>
    </location>
</feature>
<feature type="helix" evidence="28">
    <location>
        <begin position="116"/>
        <end position="124"/>
    </location>
</feature>
<feature type="strand" evidence="28">
    <location>
        <begin position="132"/>
        <end position="137"/>
    </location>
</feature>
<feature type="strand" evidence="28">
    <location>
        <begin position="143"/>
        <end position="148"/>
    </location>
</feature>
<feature type="helix" evidence="28">
    <location>
        <begin position="151"/>
        <end position="157"/>
    </location>
</feature>
<feature type="helix" evidence="28">
    <location>
        <begin position="164"/>
        <end position="173"/>
    </location>
</feature>
<feature type="helix" evidence="28">
    <location>
        <begin position="181"/>
        <end position="185"/>
    </location>
</feature>
<feature type="turn" evidence="28">
    <location>
        <begin position="192"/>
        <end position="194"/>
    </location>
</feature>
<feature type="helix" evidence="28">
    <location>
        <begin position="195"/>
        <end position="197"/>
    </location>
</feature>
<feature type="strand" evidence="28">
    <location>
        <begin position="200"/>
        <end position="204"/>
    </location>
</feature>
<feature type="strand" evidence="28">
    <location>
        <begin position="209"/>
        <end position="211"/>
    </location>
</feature>
<feature type="helix" evidence="28">
    <location>
        <begin position="213"/>
        <end position="222"/>
    </location>
</feature>
<feature type="strand" evidence="28">
    <location>
        <begin position="226"/>
        <end position="230"/>
    </location>
</feature>
<feature type="helix" evidence="28">
    <location>
        <begin position="238"/>
        <end position="241"/>
    </location>
</feature>
<feature type="helix" evidence="28">
    <location>
        <begin position="243"/>
        <end position="257"/>
    </location>
</feature>
<keyword id="KW-0002">3D-structure</keyword>
<keyword id="KW-0903">Direct protein sequencing</keyword>
<keyword id="KW-0456">Lyase</keyword>
<dbReference type="EC" id="4.1.2.47" evidence="8"/>
<dbReference type="EMBL" id="Z29091">
    <property type="protein sequence ID" value="CAA82334.1"/>
    <property type="molecule type" value="mRNA"/>
</dbReference>
<dbReference type="PDB" id="1DWO">
    <property type="method" value="X-ray"/>
    <property type="resolution" value="2.20 A"/>
    <property type="chains" value="A/B=2-258"/>
</dbReference>
<dbReference type="PDB" id="1DWP">
    <property type="method" value="X-ray"/>
    <property type="resolution" value="2.20 A"/>
    <property type="chains" value="A/B=2-258"/>
</dbReference>
<dbReference type="PDB" id="1DWQ">
    <property type="method" value="X-ray"/>
    <property type="resolution" value="2.20 A"/>
    <property type="chains" value="A/B=2-258"/>
</dbReference>
<dbReference type="PDB" id="1E89">
    <property type="method" value="X-ray"/>
    <property type="resolution" value="2.10 A"/>
    <property type="chains" value="A/B=2-258"/>
</dbReference>
<dbReference type="PDB" id="1E8D">
    <property type="method" value="X-ray"/>
    <property type="resolution" value="2.20 A"/>
    <property type="chains" value="A/B=2-258"/>
</dbReference>
<dbReference type="PDB" id="1EB8">
    <property type="method" value="X-ray"/>
    <property type="resolution" value="2.10 A"/>
    <property type="chains" value="A/B=2-258"/>
</dbReference>
<dbReference type="PDB" id="1EB9">
    <property type="method" value="X-ray"/>
    <property type="resolution" value="2.10 A"/>
    <property type="chains" value="A/B=2-258"/>
</dbReference>
<dbReference type="PDB" id="3RKS">
    <property type="method" value="X-ray"/>
    <property type="resolution" value="2.50 A"/>
    <property type="chains" value="A/B/C/D=1-258"/>
</dbReference>
<dbReference type="PDB" id="3X3H">
    <property type="method" value="X-ray"/>
    <property type="resolution" value="2.88 A"/>
    <property type="chains" value="A/B/C/D/E/F/G/H=1-258"/>
</dbReference>
<dbReference type="PDB" id="4YK7">
    <property type="method" value="X-ray"/>
    <property type="resolution" value="2.60 A"/>
    <property type="chains" value="A/B/C/D=1-258"/>
</dbReference>
<dbReference type="PDBsum" id="1DWO"/>
<dbReference type="PDBsum" id="1DWP"/>
<dbReference type="PDBsum" id="1DWQ"/>
<dbReference type="PDBsum" id="1E89"/>
<dbReference type="PDBsum" id="1E8D"/>
<dbReference type="PDBsum" id="1EB8"/>
<dbReference type="PDBsum" id="1EB9"/>
<dbReference type="PDBsum" id="3RKS"/>
<dbReference type="PDBsum" id="3X3H"/>
<dbReference type="PDBsum" id="4YK7"/>
<dbReference type="SMR" id="P52705"/>
<dbReference type="ESTHER" id="manes-hnl">
    <property type="family name" value="Hydroxynitrile_lyase"/>
</dbReference>
<dbReference type="EnsemblPlants" id="Manes.13G092100.1.v8.1">
    <property type="protein sequence ID" value="Manes.13G092100.1.v8.1.CDS"/>
    <property type="gene ID" value="Manes.13G092100.v8.1"/>
</dbReference>
<dbReference type="Gramene" id="Manes.13G092100.1.v8.1">
    <property type="protein sequence ID" value="Manes.13G092100.1.v8.1.CDS"/>
    <property type="gene ID" value="Manes.13G092100.v8.1"/>
</dbReference>
<dbReference type="KEGG" id="ag:CAA82334"/>
<dbReference type="OMA" id="AWCKLED"/>
<dbReference type="OrthoDB" id="408373at2759"/>
<dbReference type="BioCyc" id="MetaCyc:MONOMER-6902"/>
<dbReference type="BRENDA" id="4.1.2.47">
    <property type="organism ID" value="3175"/>
</dbReference>
<dbReference type="SABIO-RK" id="P52705"/>
<dbReference type="EvolutionaryTrace" id="P52705"/>
<dbReference type="GO" id="GO:0052891">
    <property type="term" value="F:aliphatic (S)-hydroxynitrile lyase activity"/>
    <property type="evidence" value="ECO:0007669"/>
    <property type="project" value="RHEA"/>
</dbReference>
<dbReference type="GO" id="GO:0052892">
    <property type="term" value="F:aromatic (S)-hydroxynitrile lyase activity"/>
    <property type="evidence" value="ECO:0007669"/>
    <property type="project" value="RHEA"/>
</dbReference>
<dbReference type="FunFam" id="3.40.50.1820:FF:000051">
    <property type="entry name" value="(S)-hydroxynitrile lyase"/>
    <property type="match status" value="1"/>
</dbReference>
<dbReference type="Gene3D" id="3.40.50.1820">
    <property type="entry name" value="alpha/beta hydrolase"/>
    <property type="match status" value="1"/>
</dbReference>
<dbReference type="InterPro" id="IPR000073">
    <property type="entry name" value="AB_hydrolase_1"/>
</dbReference>
<dbReference type="InterPro" id="IPR029058">
    <property type="entry name" value="AB_hydrolase_fold"/>
</dbReference>
<dbReference type="InterPro" id="IPR045889">
    <property type="entry name" value="MES/HNL"/>
</dbReference>
<dbReference type="PANTHER" id="PTHR10992:SF1078">
    <property type="entry name" value="AB HYDROLASE-1 DOMAIN-CONTAINING PROTEIN"/>
    <property type="match status" value="1"/>
</dbReference>
<dbReference type="PANTHER" id="PTHR10992">
    <property type="entry name" value="METHYLESTERASE FAMILY MEMBER"/>
    <property type="match status" value="1"/>
</dbReference>
<dbReference type="Pfam" id="PF00561">
    <property type="entry name" value="Abhydrolase_1"/>
    <property type="match status" value="1"/>
</dbReference>
<dbReference type="SUPFAM" id="SSF53474">
    <property type="entry name" value="alpha/beta-Hydrolases"/>
    <property type="match status" value="1"/>
</dbReference>
<evidence type="ECO:0000250" key="1">
    <source>
        <dbReference type="UniProtKB" id="P52704"/>
    </source>
</evidence>
<evidence type="ECO:0000255" key="2"/>
<evidence type="ECO:0000269" key="3">
    <source>
    </source>
</evidence>
<evidence type="ECO:0000269" key="4">
    <source>
    </source>
</evidence>
<evidence type="ECO:0000269" key="5">
    <source>
    </source>
</evidence>
<evidence type="ECO:0000269" key="6">
    <source>
    </source>
</evidence>
<evidence type="ECO:0000269" key="7">
    <source>
    </source>
</evidence>
<evidence type="ECO:0000269" key="8">
    <source ref="2"/>
</evidence>
<evidence type="ECO:0000303" key="9">
    <source>
    </source>
</evidence>
<evidence type="ECO:0000303" key="10">
    <source>
    </source>
</evidence>
<evidence type="ECO:0000303" key="11">
    <source>
    </source>
</evidence>
<evidence type="ECO:0000303" key="12">
    <source>
    </source>
</evidence>
<evidence type="ECO:0000303" key="13">
    <source>
    </source>
</evidence>
<evidence type="ECO:0000303" key="14">
    <source ref="2"/>
</evidence>
<evidence type="ECO:0000305" key="15"/>
<evidence type="ECO:0000305" key="16">
    <source>
    </source>
</evidence>
<evidence type="ECO:0000305" key="17">
    <source>
    </source>
</evidence>
<evidence type="ECO:0000305" key="18">
    <source>
    </source>
</evidence>
<evidence type="ECO:0000305" key="19">
    <source>
    </source>
</evidence>
<evidence type="ECO:0000305" key="20">
    <source>
    </source>
</evidence>
<evidence type="ECO:0007744" key="21">
    <source>
        <dbReference type="PDB" id="1DWO"/>
    </source>
</evidence>
<evidence type="ECO:0007744" key="22">
    <source>
        <dbReference type="PDB" id="1DWP"/>
    </source>
</evidence>
<evidence type="ECO:0007744" key="23">
    <source>
        <dbReference type="PDB" id="1DWQ"/>
    </source>
</evidence>
<evidence type="ECO:0007744" key="24">
    <source>
        <dbReference type="PDB" id="1E89"/>
    </source>
</evidence>
<evidence type="ECO:0007744" key="25">
    <source>
        <dbReference type="PDB" id="1E8D"/>
    </source>
</evidence>
<evidence type="ECO:0007744" key="26">
    <source>
        <dbReference type="PDB" id="1EB8"/>
    </source>
</evidence>
<evidence type="ECO:0007744" key="27">
    <source>
        <dbReference type="PDB" id="1EB9"/>
    </source>
</evidence>
<evidence type="ECO:0007829" key="28">
    <source>
        <dbReference type="PDB" id="1E89"/>
    </source>
</evidence>
<accession>P52705</accession>
<gene>
    <name evidence="9 10 12" type="primary">HNL</name>
</gene>
<comment type="function">
    <text evidence="4 5 6 7 8 17 19 20">Involved in cyanogenesis, the release of HCN from cyanogenic glycosides in injured tissues; the release of toxic HCN is believed to play a central role in the defense mechanism of plants against herbivores and microbial attack (Probable). Decomposes a variety of cyanohydrins (alpha-hydroxynitriles) into HCN and the corresponding aldehydes or ketones; two natural substrates are 2-hydroxy-2-methylpropanenitrile (acetone cyanohydrin) and 2-hydroxy-2-methylbutanenitrile (2-butanone cyanohydrin), but in vitro can also act on 2-hydroxy-2-methylpentanenitrile (2-pentanone cyanohydrin) and mandelonitrile (PubMed:11316882, PubMed:11742123, PubMed:8203915, PubMed:8824213). Is also able to catalyze the reverse reaction in vitro, leading to the stereospecific synthesis of aliphatic, aromatic, and heterocyclic cyanohydrins, important intermediates in the production of various agrochemicals or pharmaceuticals (Ref.2).</text>
</comment>
<comment type="catalytic activity">
    <reaction evidence="8">
        <text>a monosubstituted aliphatic (S)-hydroxynitrile = an aldehyde + hydrogen cyanide</text>
        <dbReference type="Rhea" id="RHEA:56588"/>
        <dbReference type="ChEBI" id="CHEBI:17478"/>
        <dbReference type="ChEBI" id="CHEBI:18407"/>
        <dbReference type="ChEBI" id="CHEBI:140596"/>
        <dbReference type="EC" id="4.1.2.47"/>
    </reaction>
</comment>
<comment type="catalytic activity">
    <reaction evidence="8 19">
        <text>a disubstituted aliphatic (S)-hydroxynitrile = a ketone + hydrogen cyanide</text>
        <dbReference type="Rhea" id="RHEA:56592"/>
        <dbReference type="ChEBI" id="CHEBI:17087"/>
        <dbReference type="ChEBI" id="CHEBI:18407"/>
        <dbReference type="ChEBI" id="CHEBI:140597"/>
        <dbReference type="EC" id="4.1.2.47"/>
    </reaction>
</comment>
<comment type="catalytic activity">
    <reaction evidence="8">
        <text>an aromatic (S)-hydroxynitrile = an aromatic aldehyde + hydrogen cyanide</text>
        <dbReference type="Rhea" id="RHEA:54660"/>
        <dbReference type="ChEBI" id="CHEBI:18407"/>
        <dbReference type="ChEBI" id="CHEBI:33855"/>
        <dbReference type="ChEBI" id="CHEBI:138306"/>
        <dbReference type="EC" id="4.1.2.47"/>
    </reaction>
</comment>
<comment type="catalytic activity">
    <reaction evidence="4 5 6 7">
        <text>2-hydroxy-2-methylpropanenitrile = acetone + hydrogen cyanide</text>
        <dbReference type="Rhea" id="RHEA:11932"/>
        <dbReference type="ChEBI" id="CHEBI:15347"/>
        <dbReference type="ChEBI" id="CHEBI:15348"/>
        <dbReference type="ChEBI" id="CHEBI:18407"/>
    </reaction>
    <physiologicalReaction direction="left-to-right" evidence="17 19 20">
        <dbReference type="Rhea" id="RHEA:11933"/>
    </physiologicalReaction>
</comment>
<comment type="catalytic activity">
    <reaction evidence="6 8">
        <text>butan-2-one + hydrogen cyanide = 2-hydroxy-2-methylbutanenitrile</text>
        <dbReference type="Rhea" id="RHEA:77467"/>
        <dbReference type="ChEBI" id="CHEBI:18407"/>
        <dbReference type="ChEBI" id="CHEBI:28398"/>
        <dbReference type="ChEBI" id="CHEBI:60954"/>
    </reaction>
    <physiologicalReaction direction="right-to-left" evidence="19">
        <dbReference type="Rhea" id="RHEA:77469"/>
    </physiologicalReaction>
</comment>
<comment type="catalytic activity">
    <reaction evidence="8 19">
        <text>pentan-2-one + hydrogen cyanide = (2S)-2-hydroxy-2-methylpentanenitrile</text>
        <dbReference type="Rhea" id="RHEA:77471"/>
        <dbReference type="ChEBI" id="CHEBI:16472"/>
        <dbReference type="ChEBI" id="CHEBI:18407"/>
        <dbReference type="ChEBI" id="CHEBI:197344"/>
    </reaction>
</comment>
<comment type="catalytic activity">
    <reaction evidence="8">
        <text>hexan-2-one + hydrogen cyanide = (2S)-2-hydroxy-2-methylhexanenitrile</text>
        <dbReference type="Rhea" id="RHEA:77479"/>
        <dbReference type="ChEBI" id="CHEBI:18407"/>
        <dbReference type="ChEBI" id="CHEBI:89206"/>
        <dbReference type="ChEBI" id="CHEBI:197345"/>
    </reaction>
</comment>
<comment type="catalytic activity">
    <reaction evidence="8">
        <text>heptan-2-one + hydrogen cyanide = (2S)-2-hydroxy-2-methylheptanenitrile</text>
        <dbReference type="Rhea" id="RHEA:77483"/>
        <dbReference type="ChEBI" id="CHEBI:5672"/>
        <dbReference type="ChEBI" id="CHEBI:18407"/>
        <dbReference type="ChEBI" id="CHEBI:197346"/>
    </reaction>
</comment>
<comment type="catalytic activity">
    <reaction evidence="8">
        <text>4-methylpentan-2-one + hydrogen cyanide = (2S)-2-hydroxy-2,4-dimethylpentanenitrile</text>
        <dbReference type="Rhea" id="RHEA:77487"/>
        <dbReference type="ChEBI" id="CHEBI:18407"/>
        <dbReference type="ChEBI" id="CHEBI:82344"/>
        <dbReference type="ChEBI" id="CHEBI:197348"/>
    </reaction>
</comment>
<comment type="catalytic activity">
    <reaction evidence="8">
        <text>3,3-dimethylbutan-2-one + hydrogen cyanide = (2S)-2-hydroxy-2-methyl-3,3-dimethylbutanenitrile</text>
        <dbReference type="Rhea" id="RHEA:77491"/>
        <dbReference type="ChEBI" id="CHEBI:18407"/>
        <dbReference type="ChEBI" id="CHEBI:197349"/>
        <dbReference type="ChEBI" id="CHEBI:197350"/>
    </reaction>
</comment>
<comment type="catalytic activity">
    <reaction evidence="8">
        <text>acetophenone + hydrogen cyanide = (2S)-2-hydroxy-2-phenylpropanenitrile</text>
        <dbReference type="Rhea" id="RHEA:77495"/>
        <dbReference type="ChEBI" id="CHEBI:18407"/>
        <dbReference type="ChEBI" id="CHEBI:27632"/>
        <dbReference type="ChEBI" id="CHEBI:197351"/>
    </reaction>
</comment>
<comment type="catalytic activity">
    <reaction evidence="8">
        <text>propanal + hydrogen cyanide = (2S)-2-hydroxybutanenitrile</text>
        <dbReference type="Rhea" id="RHEA:77395"/>
        <dbReference type="ChEBI" id="CHEBI:17153"/>
        <dbReference type="ChEBI" id="CHEBI:18407"/>
        <dbReference type="ChEBI" id="CHEBI:197352"/>
    </reaction>
</comment>
<comment type="catalytic activity">
    <reaction evidence="8">
        <text>pentanal + hydrogen cyanide = (2S)-2-hydroxyhexanenitrile</text>
        <dbReference type="Rhea" id="RHEA:77399"/>
        <dbReference type="ChEBI" id="CHEBI:18407"/>
        <dbReference type="ChEBI" id="CHEBI:84069"/>
        <dbReference type="ChEBI" id="CHEBI:197353"/>
    </reaction>
</comment>
<comment type="catalytic activity">
    <reaction evidence="8">
        <text>2-methylpropanal + hydrogen cyanide = (2S)-2-hydroxy-3-methylbutanenitrile</text>
        <dbReference type="Rhea" id="RHEA:77403"/>
        <dbReference type="ChEBI" id="CHEBI:18407"/>
        <dbReference type="ChEBI" id="CHEBI:48943"/>
        <dbReference type="ChEBI" id="CHEBI:197354"/>
    </reaction>
</comment>
<comment type="catalytic activity">
    <reaction evidence="8">
        <text>2,2-dimethylpropanal + hydrogen cyanide = (2S)-2-hydroxy-3,3-dimethylbutanenitrile</text>
        <dbReference type="Rhea" id="RHEA:77407"/>
        <dbReference type="ChEBI" id="CHEBI:18407"/>
        <dbReference type="ChEBI" id="CHEBI:141557"/>
        <dbReference type="ChEBI" id="CHEBI:197355"/>
    </reaction>
</comment>
<comment type="catalytic activity">
    <reaction evidence="8">
        <text>acrolein + hydrogen cyanide = (2S)-2-hydroxybut-3-enenitrile</text>
        <dbReference type="Rhea" id="RHEA:77411"/>
        <dbReference type="ChEBI" id="CHEBI:15368"/>
        <dbReference type="ChEBI" id="CHEBI:18407"/>
        <dbReference type="ChEBI" id="CHEBI:197356"/>
    </reaction>
</comment>
<comment type="catalytic activity">
    <reaction evidence="8">
        <text>(2E)-but-2-enal + hydrogen cyanide = (2S,3E)-2-hydroxypent-3-enenitrile</text>
        <dbReference type="Rhea" id="RHEA:77415"/>
        <dbReference type="ChEBI" id="CHEBI:18407"/>
        <dbReference type="ChEBI" id="CHEBI:41607"/>
        <dbReference type="ChEBI" id="CHEBI:197357"/>
    </reaction>
</comment>
<comment type="catalytic activity">
    <reaction evidence="8">
        <text>(E)-hex-2-enal + hydrogen cyanide = (2S,3E)-2-hydroxyhept-3-enenitrile</text>
        <dbReference type="Rhea" id="RHEA:77419"/>
        <dbReference type="ChEBI" id="CHEBI:18407"/>
        <dbReference type="ChEBI" id="CHEBI:28913"/>
        <dbReference type="ChEBI" id="CHEBI:197358"/>
    </reaction>
</comment>
<comment type="catalytic activity">
    <reaction evidence="8">
        <text>cyclohexanecarbaldehyde + hydrogen cyanide = (2S)-2-cyclohexyl-2-hydroxyacetonitrile</text>
        <dbReference type="Rhea" id="RHEA:77423"/>
        <dbReference type="ChEBI" id="CHEBI:18407"/>
        <dbReference type="ChEBI" id="CHEBI:197359"/>
        <dbReference type="ChEBI" id="CHEBI:197360"/>
    </reaction>
</comment>
<comment type="catalytic activity">
    <reaction evidence="8 18">
        <text>benzaldehyde + hydrogen cyanide = (S)-mandelonitrile</text>
        <dbReference type="Rhea" id="RHEA:77427"/>
        <dbReference type="ChEBI" id="CHEBI:17169"/>
        <dbReference type="ChEBI" id="CHEBI:18407"/>
        <dbReference type="ChEBI" id="CHEBI:36941"/>
    </reaction>
</comment>
<comment type="catalytic activity">
    <reaction evidence="8">
        <text>4-methoxybenzaldehyde + hydrogen cyanide = (2S)-2-hydroxy-2-(4-methoxyphenyl)acetonitrile</text>
        <dbReference type="Rhea" id="RHEA:77447"/>
        <dbReference type="ChEBI" id="CHEBI:18407"/>
        <dbReference type="ChEBI" id="CHEBI:28235"/>
        <dbReference type="ChEBI" id="CHEBI:197328"/>
    </reaction>
</comment>
<comment type="catalytic activity">
    <reaction evidence="8">
        <text>piperonal + hydrogen cyanide = (2S)-2-(2H-1,3-benzodioxol-5-yl)-2-hydroxyacetonitrile</text>
        <dbReference type="Rhea" id="RHEA:77451"/>
        <dbReference type="ChEBI" id="CHEBI:8240"/>
        <dbReference type="ChEBI" id="CHEBI:18407"/>
        <dbReference type="ChEBI" id="CHEBI:197361"/>
    </reaction>
</comment>
<comment type="catalytic activity">
    <reaction evidence="8">
        <text>formylthiophene + hydrogen cyanide = (2R)-2-hydroxy-2-(thiophen-2-yl)acetonitrile</text>
        <dbReference type="Rhea" id="RHEA:77455"/>
        <dbReference type="ChEBI" id="CHEBI:18407"/>
        <dbReference type="ChEBI" id="CHEBI:87301"/>
        <dbReference type="ChEBI" id="CHEBI:197332"/>
    </reaction>
</comment>
<comment type="catalytic activity">
    <reaction evidence="8">
        <text>3-formylthiophene + hydrogen cyanide = (2S)-2-hydroxy-2-(thiophen-3-yl)acetonitrile</text>
        <dbReference type="Rhea" id="RHEA:77459"/>
        <dbReference type="ChEBI" id="CHEBI:18407"/>
        <dbReference type="ChEBI" id="CHEBI:87611"/>
        <dbReference type="ChEBI" id="CHEBI:197333"/>
    </reaction>
</comment>
<comment type="catalytic activity">
    <reaction evidence="8">
        <text>furan-3-carbaldehyde + hydrogen cyanide = (2S)-2-(furan-3-yl)-2-hydroxyacetonitrile</text>
        <dbReference type="Rhea" id="RHEA:77463"/>
        <dbReference type="ChEBI" id="CHEBI:18407"/>
        <dbReference type="ChEBI" id="CHEBI:87609"/>
        <dbReference type="ChEBI" id="CHEBI:197362"/>
    </reaction>
</comment>
<comment type="biophysicochemical properties">
    <kinetics>
        <KM evidence="6">105 mM for 2-hydroxy-2-methylpropanenitrile</KM>
        <KM evidence="7">101 mM for 2-hydroxy-2-methylpropanenitrile</KM>
        <KM evidence="4">174 mM for 2-hydroxy-2-methylpropanenitrile</KM>
        <KM evidence="5">67 mM for 2-hydroxy-2-methylpropanenitrile</KM>
        <KM evidence="5">30 mM for mandelonitrile</KM>
        <text evidence="6">The large KM for 2-hydroxy-2-methylpropanenitrile is not inconsistent with the concentration of cyanoglucosides in cassava leaves.</text>
    </kinetics>
    <phDependence>
        <text evidence="6">Exact pH optimum pH is difficult to determine due to the fact that acetone cyanohydrin is very unstable above pH 6.5 but HNL activity was found to rise from pH 3.5 to pH 5.4. The pH of the cell sap of damages cassava leaves was found to be 5.3.</text>
    </phDependence>
</comment>
<comment type="subunit">
    <text evidence="7 17">Homotetramer.</text>
</comment>
<comment type="biotechnology">
    <text evidence="8">This enzyme can be used as a biocatalyst for stereoselective synthesis of a wide array of (S)-cyanohydrins by addition of HCN to aldehydes or ketones. Optically active cyanohydrins are interesting intermediates for the synthesis of alpha-hydroxy acids, alpha-hydroxy ketones, or beta-ethanolamines, all of which are important building blocks in organic synthesis.</text>
</comment>
<comment type="similarity">
    <text evidence="15">Belongs to the AB hydrolase superfamily. Hydroxynitrile lyase family.</text>
</comment>
<proteinExistence type="evidence at protein level"/>
<name>HNL_MANES</name>